<dbReference type="EMBL" id="AB044947">
    <property type="protein sequence ID" value="BAB20071.1"/>
    <property type="molecule type" value="Genomic_DNA"/>
</dbReference>
<dbReference type="EMBL" id="AB044947">
    <property type="protein sequence ID" value="BAB20072.1"/>
    <property type="molecule type" value="Genomic_DNA"/>
</dbReference>
<dbReference type="EMBL" id="AB044947">
    <property type="protein sequence ID" value="BAB20073.1"/>
    <property type="molecule type" value="Genomic_DNA"/>
</dbReference>
<dbReference type="EMBL" id="AB044944">
    <property type="protein sequence ID" value="BAB20068.1"/>
    <property type="molecule type" value="mRNA"/>
</dbReference>
<dbReference type="EMBL" id="AB044945">
    <property type="protein sequence ID" value="BAB20069.1"/>
    <property type="molecule type" value="mRNA"/>
</dbReference>
<dbReference type="EMBL" id="AB044946">
    <property type="protein sequence ID" value="BAB20070.1"/>
    <property type="molecule type" value="mRNA"/>
</dbReference>
<dbReference type="EMBL" id="AF308608">
    <property type="protein sequence ID" value="AAL08806.1"/>
    <property type="molecule type" value="mRNA"/>
</dbReference>
<dbReference type="EMBL" id="AB021172">
    <property type="protein sequence ID" value="BAB20288.1"/>
    <property type="molecule type" value="mRNA"/>
</dbReference>
<dbReference type="EMBL" id="AL136584">
    <property type="protein sequence ID" value="CAB66519.1"/>
    <property type="molecule type" value="mRNA"/>
</dbReference>
<dbReference type="EMBL" id="AK055038">
    <property type="protein sequence ID" value="BAG51454.1"/>
    <property type="molecule type" value="mRNA"/>
</dbReference>
<dbReference type="EMBL" id="AK126574">
    <property type="protein sequence ID" value="BAC86600.1"/>
    <property type="molecule type" value="mRNA"/>
</dbReference>
<dbReference type="EMBL" id="AK131248">
    <property type="protein sequence ID" value="BAD18428.1"/>
    <property type="molecule type" value="mRNA"/>
</dbReference>
<dbReference type="EMBL" id="AK296415">
    <property type="protein sequence ID" value="BAG59078.1"/>
    <property type="molecule type" value="mRNA"/>
</dbReference>
<dbReference type="EMBL" id="AK299949">
    <property type="protein sequence ID" value="BAG61777.1"/>
    <property type="molecule type" value="mRNA"/>
</dbReference>
<dbReference type="EMBL" id="AC009118">
    <property type="status" value="NOT_ANNOTATED_CDS"/>
    <property type="molecule type" value="Genomic_DNA"/>
</dbReference>
<dbReference type="EMBL" id="BC011795">
    <property type="protein sequence ID" value="AAH11795.1"/>
    <property type="molecule type" value="mRNA"/>
</dbReference>
<dbReference type="EMBL" id="AB033006">
    <property type="protein sequence ID" value="BAA86494.2"/>
    <property type="status" value="ALT_INIT"/>
    <property type="molecule type" value="mRNA"/>
</dbReference>
<dbReference type="CCDS" id="CCDS10797.1">
    <molecule id="Q9ULP0-3"/>
</dbReference>
<dbReference type="CCDS" id="CCDS45500.1">
    <molecule id="Q9ULP0-6"/>
</dbReference>
<dbReference type="CCDS" id="CCDS55999.1">
    <molecule id="Q9ULP0-7"/>
</dbReference>
<dbReference type="CCDS" id="CCDS58465.1">
    <molecule id="Q9ULP0-8"/>
</dbReference>
<dbReference type="CCDS" id="CCDS58466.1">
    <molecule id="Q9ULP0-1"/>
</dbReference>
<dbReference type="CCDS" id="CCDS58467.1">
    <molecule id="Q9ULP0-2"/>
</dbReference>
<dbReference type="RefSeq" id="NP_001123959.1">
    <molecule id="Q9ULP0-6"/>
    <property type="nucleotide sequence ID" value="NM_001130487.2"/>
</dbReference>
<dbReference type="RefSeq" id="NP_001229762.1">
    <molecule id="Q9ULP0-7"/>
    <property type="nucleotide sequence ID" value="NM_001242833.2"/>
</dbReference>
<dbReference type="RefSeq" id="NP_001229763.1">
    <molecule id="Q9ULP0-8"/>
    <property type="nucleotide sequence ID" value="NM_001242834.2"/>
</dbReference>
<dbReference type="RefSeq" id="NP_001229764.1">
    <molecule id="Q9ULP0-1"/>
    <property type="nucleotide sequence ID" value="NM_001242835.2"/>
</dbReference>
<dbReference type="RefSeq" id="NP_001229765.1">
    <molecule id="Q9ULP0-2"/>
    <property type="nucleotide sequence ID" value="NM_001242836.2"/>
</dbReference>
<dbReference type="RefSeq" id="NP_001365275.1">
    <molecule id="Q9ULP0-3"/>
    <property type="nucleotide sequence ID" value="NM_001378346.1"/>
</dbReference>
<dbReference type="RefSeq" id="NP_065198.1">
    <molecule id="Q9ULP0-3"/>
    <property type="nucleotide sequence ID" value="NM_020465.4"/>
</dbReference>
<dbReference type="RefSeq" id="NP_075061.1">
    <molecule id="Q9ULP0-3"/>
    <property type="nucleotide sequence ID" value="NM_022910.4"/>
</dbReference>
<dbReference type="RefSeq" id="XP_016879079.1">
    <property type="nucleotide sequence ID" value="XM_017023590.1"/>
</dbReference>
<dbReference type="SMR" id="Q9ULP0"/>
<dbReference type="BioGRID" id="122372">
    <property type="interactions" value="54"/>
</dbReference>
<dbReference type="FunCoup" id="Q9ULP0">
    <property type="interactions" value="1214"/>
</dbReference>
<dbReference type="IntAct" id="Q9ULP0">
    <property type="interactions" value="51"/>
</dbReference>
<dbReference type="MINT" id="Q9ULP0"/>
<dbReference type="STRING" id="9606.ENSP00000377823"/>
<dbReference type="ESTHER" id="human-NDRG4">
    <property type="family name" value="Ndr_family"/>
</dbReference>
<dbReference type="MEROPS" id="S33.986"/>
<dbReference type="iPTMnet" id="Q9ULP0"/>
<dbReference type="PhosphoSitePlus" id="Q9ULP0"/>
<dbReference type="BioMuta" id="NDRG4"/>
<dbReference type="DMDM" id="20141614"/>
<dbReference type="jPOST" id="Q9ULP0"/>
<dbReference type="MassIVE" id="Q9ULP0"/>
<dbReference type="PaxDb" id="9606-ENSP00000377823"/>
<dbReference type="PeptideAtlas" id="Q9ULP0"/>
<dbReference type="ProteomicsDB" id="4431"/>
<dbReference type="ProteomicsDB" id="46171"/>
<dbReference type="ProteomicsDB" id="85084">
    <molecule id="Q9ULP0-1"/>
</dbReference>
<dbReference type="ProteomicsDB" id="85085">
    <molecule id="Q9ULP0-2"/>
</dbReference>
<dbReference type="ProteomicsDB" id="85086">
    <molecule id="Q9ULP0-3"/>
</dbReference>
<dbReference type="ProteomicsDB" id="85087">
    <molecule id="Q9ULP0-4"/>
</dbReference>
<dbReference type="ProteomicsDB" id="85088">
    <molecule id="Q9ULP0-5"/>
</dbReference>
<dbReference type="ProteomicsDB" id="85089">
    <molecule id="Q9ULP0-6"/>
</dbReference>
<dbReference type="TopDownProteomics" id="Q9ULP0-3">
    <molecule id="Q9ULP0-3"/>
</dbReference>
<dbReference type="Antibodypedia" id="2919">
    <property type="antibodies" value="294 antibodies from 33 providers"/>
</dbReference>
<dbReference type="DNASU" id="65009"/>
<dbReference type="Ensembl" id="ENST00000258187.9">
    <molecule id="Q9ULP0-3"/>
    <property type="protein sequence ID" value="ENSP00000258187.5"/>
    <property type="gene ID" value="ENSG00000103034.15"/>
</dbReference>
<dbReference type="Ensembl" id="ENST00000356752.8">
    <molecule id="Q9ULP0-7"/>
    <property type="protein sequence ID" value="ENSP00000349193.4"/>
    <property type="gene ID" value="ENSG00000103034.15"/>
</dbReference>
<dbReference type="Ensembl" id="ENST00000394279.6">
    <molecule id="Q9ULP0-3"/>
    <property type="protein sequence ID" value="ENSP00000377820.2"/>
    <property type="gene ID" value="ENSG00000103034.15"/>
</dbReference>
<dbReference type="Ensembl" id="ENST00000394282.8">
    <molecule id="Q9ULP0-6"/>
    <property type="protein sequence ID" value="ENSP00000377823.4"/>
    <property type="gene ID" value="ENSG00000103034.15"/>
</dbReference>
<dbReference type="Ensembl" id="ENST00000563799.5">
    <molecule id="Q9ULP0-5"/>
    <property type="protein sequence ID" value="ENSP00000458113.1"/>
    <property type="gene ID" value="ENSG00000103034.15"/>
</dbReference>
<dbReference type="Ensembl" id="ENST00000566192.5">
    <molecule id="Q9ULP0-2"/>
    <property type="protein sequence ID" value="ENSP00000454410.1"/>
    <property type="gene ID" value="ENSG00000103034.15"/>
</dbReference>
<dbReference type="Ensembl" id="ENST00000568640.5">
    <molecule id="Q9ULP0-8"/>
    <property type="protein sequence ID" value="ENSP00000456338.1"/>
    <property type="gene ID" value="ENSG00000103034.15"/>
</dbReference>
<dbReference type="Ensembl" id="ENST00000570248.6">
    <molecule id="Q9ULP0-1"/>
    <property type="protein sequence ID" value="ENSP00000457659.1"/>
    <property type="gene ID" value="ENSG00000103034.15"/>
</dbReference>
<dbReference type="GeneID" id="65009"/>
<dbReference type="KEGG" id="hsa:65009"/>
<dbReference type="MANE-Select" id="ENST00000570248.6">
    <property type="protein sequence ID" value="ENSP00000457659.1"/>
    <property type="RefSeq nucleotide sequence ID" value="NM_001242835.2"/>
    <property type="RefSeq protein sequence ID" value="NP_001229764.1"/>
</dbReference>
<dbReference type="UCSC" id="uc002enk.4">
    <molecule id="Q9ULP0-1"/>
    <property type="organism name" value="human"/>
</dbReference>
<dbReference type="AGR" id="HGNC:14466"/>
<dbReference type="CTD" id="65009"/>
<dbReference type="DisGeNET" id="65009"/>
<dbReference type="GeneCards" id="NDRG4"/>
<dbReference type="HGNC" id="HGNC:14466">
    <property type="gene designation" value="NDRG4"/>
</dbReference>
<dbReference type="HPA" id="ENSG00000103034">
    <property type="expression patterns" value="Tissue enhanced (brain, heart muscle)"/>
</dbReference>
<dbReference type="MalaCards" id="NDRG4"/>
<dbReference type="MIM" id="614463">
    <property type="type" value="gene"/>
</dbReference>
<dbReference type="neXtProt" id="NX_Q9ULP0"/>
<dbReference type="OpenTargets" id="ENSG00000103034"/>
<dbReference type="PharmGKB" id="PA31485"/>
<dbReference type="VEuPathDB" id="HostDB:ENSG00000103034"/>
<dbReference type="eggNOG" id="KOG2931">
    <property type="taxonomic scope" value="Eukaryota"/>
</dbReference>
<dbReference type="GeneTree" id="ENSGT00950000182872"/>
<dbReference type="HOGENOM" id="CLU_035361_1_0_1"/>
<dbReference type="InParanoid" id="Q9ULP0"/>
<dbReference type="OMA" id="EHPPDFE"/>
<dbReference type="OrthoDB" id="191979at2759"/>
<dbReference type="PAN-GO" id="Q9ULP0">
    <property type="GO annotations" value="4 GO annotations based on evolutionary models"/>
</dbReference>
<dbReference type="PhylomeDB" id="Q9ULP0"/>
<dbReference type="TreeFam" id="TF313168"/>
<dbReference type="PathwayCommons" id="Q9ULP0"/>
<dbReference type="SignaLink" id="Q9ULP0"/>
<dbReference type="BioGRID-ORCS" id="65009">
    <property type="hits" value="9 hits in 1154 CRISPR screens"/>
</dbReference>
<dbReference type="ChiTaRS" id="NDRG4">
    <property type="organism name" value="human"/>
</dbReference>
<dbReference type="GeneWiki" id="NDRG4"/>
<dbReference type="GenomeRNAi" id="65009"/>
<dbReference type="Pharos" id="Q9ULP0">
    <property type="development level" value="Tbio"/>
</dbReference>
<dbReference type="PRO" id="PR:Q9ULP0"/>
<dbReference type="Proteomes" id="UP000005640">
    <property type="component" value="Chromosome 16"/>
</dbReference>
<dbReference type="RNAct" id="Q9ULP0">
    <property type="molecule type" value="protein"/>
</dbReference>
<dbReference type="Bgee" id="ENSG00000103034">
    <property type="expression patterns" value="Expressed in right hemisphere of cerebellum and 155 other cell types or tissues"/>
</dbReference>
<dbReference type="ExpressionAtlas" id="Q9ULP0">
    <property type="expression patterns" value="baseline and differential"/>
</dbReference>
<dbReference type="GO" id="GO:0016323">
    <property type="term" value="C:basolateral plasma membrane"/>
    <property type="evidence" value="ECO:0000314"/>
    <property type="project" value="BHF-UCL"/>
</dbReference>
<dbReference type="GO" id="GO:0031253">
    <property type="term" value="C:cell projection membrane"/>
    <property type="evidence" value="ECO:0007669"/>
    <property type="project" value="Ensembl"/>
</dbReference>
<dbReference type="GO" id="GO:0005737">
    <property type="term" value="C:cytoplasm"/>
    <property type="evidence" value="ECO:0000314"/>
    <property type="project" value="BHF-UCL"/>
</dbReference>
<dbReference type="GO" id="GO:0005829">
    <property type="term" value="C:cytosol"/>
    <property type="evidence" value="ECO:0000314"/>
    <property type="project" value="HPA"/>
</dbReference>
<dbReference type="GO" id="GO:0005789">
    <property type="term" value="C:endoplasmic reticulum membrane"/>
    <property type="evidence" value="ECO:0000250"/>
    <property type="project" value="BHF-UCL"/>
</dbReference>
<dbReference type="GO" id="GO:0005886">
    <property type="term" value="C:plasma membrane"/>
    <property type="evidence" value="ECO:0000314"/>
    <property type="project" value="HPA"/>
</dbReference>
<dbReference type="GO" id="GO:0060038">
    <property type="term" value="P:cardiac muscle cell proliferation"/>
    <property type="evidence" value="ECO:0000250"/>
    <property type="project" value="BHF-UCL"/>
</dbReference>
<dbReference type="GO" id="GO:0030154">
    <property type="term" value="P:cell differentiation"/>
    <property type="evidence" value="ECO:0000303"/>
    <property type="project" value="UniProtKB"/>
</dbReference>
<dbReference type="GO" id="GO:0060973">
    <property type="term" value="P:cell migration involved in heart development"/>
    <property type="evidence" value="ECO:0007669"/>
    <property type="project" value="Ensembl"/>
</dbReference>
<dbReference type="GO" id="GO:0035050">
    <property type="term" value="P:embryonic heart tube development"/>
    <property type="evidence" value="ECO:0000250"/>
    <property type="project" value="BHF-UCL"/>
</dbReference>
<dbReference type="GO" id="GO:0001947">
    <property type="term" value="P:heart looping"/>
    <property type="evidence" value="ECO:0000250"/>
    <property type="project" value="BHF-UCL"/>
</dbReference>
<dbReference type="GO" id="GO:0010642">
    <property type="term" value="P:negative regulation of platelet-derived growth factor receptor signaling pathway"/>
    <property type="evidence" value="ECO:0000314"/>
    <property type="project" value="BHF-UCL"/>
</dbReference>
<dbReference type="GO" id="GO:0014912">
    <property type="term" value="P:negative regulation of smooth muscle cell migration"/>
    <property type="evidence" value="ECO:0000314"/>
    <property type="project" value="BHF-UCL"/>
</dbReference>
<dbReference type="GO" id="GO:0048662">
    <property type="term" value="P:negative regulation of smooth muscle cell proliferation"/>
    <property type="evidence" value="ECO:0000314"/>
    <property type="project" value="BHF-UCL"/>
</dbReference>
<dbReference type="GO" id="GO:0070374">
    <property type="term" value="P:positive regulation of ERK1 and ERK2 cascade"/>
    <property type="evidence" value="ECO:0000314"/>
    <property type="project" value="BHF-UCL"/>
</dbReference>
<dbReference type="GO" id="GO:0010976">
    <property type="term" value="P:positive regulation of neuron projection development"/>
    <property type="evidence" value="ECO:0000250"/>
    <property type="project" value="BHF-UCL"/>
</dbReference>
<dbReference type="GO" id="GO:2001135">
    <property type="term" value="P:regulation of endocytic recycling"/>
    <property type="evidence" value="ECO:0007669"/>
    <property type="project" value="Ensembl"/>
</dbReference>
<dbReference type="GO" id="GO:0007165">
    <property type="term" value="P:signal transduction"/>
    <property type="evidence" value="ECO:0000318"/>
    <property type="project" value="GO_Central"/>
</dbReference>
<dbReference type="GO" id="GO:0048278">
    <property type="term" value="P:vesicle docking"/>
    <property type="evidence" value="ECO:0007669"/>
    <property type="project" value="Ensembl"/>
</dbReference>
<dbReference type="GO" id="GO:0008542">
    <property type="term" value="P:visual learning"/>
    <property type="evidence" value="ECO:0007669"/>
    <property type="project" value="Ensembl"/>
</dbReference>
<dbReference type="FunFam" id="3.40.50.1820:FF:000009">
    <property type="entry name" value="NDRG family member 4"/>
    <property type="match status" value="1"/>
</dbReference>
<dbReference type="Gene3D" id="3.40.50.1820">
    <property type="entry name" value="alpha/beta hydrolase"/>
    <property type="match status" value="1"/>
</dbReference>
<dbReference type="InterPro" id="IPR029058">
    <property type="entry name" value="AB_hydrolase_fold"/>
</dbReference>
<dbReference type="InterPro" id="IPR004142">
    <property type="entry name" value="NDRG"/>
</dbReference>
<dbReference type="PANTHER" id="PTHR11034">
    <property type="entry name" value="N-MYC DOWNSTREAM REGULATED"/>
    <property type="match status" value="1"/>
</dbReference>
<dbReference type="Pfam" id="PF03096">
    <property type="entry name" value="Ndr"/>
    <property type="match status" value="1"/>
</dbReference>
<dbReference type="SUPFAM" id="SSF53474">
    <property type="entry name" value="alpha/beta-Hydrolases"/>
    <property type="match status" value="1"/>
</dbReference>
<reference key="1">
    <citation type="journal article" date="2001" name="Genomics">
        <title>Characterization of the human NDRG gene family: a newly identified member, NDRG4, is specifically expressed in brain and heart.</title>
        <authorList>
            <person name="Zhou R.-H."/>
            <person name="Kokame K."/>
            <person name="Tsukamoto Y."/>
            <person name="Yutani C."/>
            <person name="Kato H."/>
            <person name="Miyata T."/>
        </authorList>
    </citation>
    <scope>NUCLEOTIDE SEQUENCE [GENOMIC DNA / MRNA]</scope>
    <scope>ALTERNATIVE SPLICING</scope>
    <scope>TISSUE SPECIFICITY</scope>
</reference>
<reference key="2">
    <citation type="journal article" date="2002" name="Mol. Cell. Biochem.">
        <title>Characterization and expression of three novel differentiation-related genes belong to the human NDRG gene family.</title>
        <authorList>
            <person name="Qu X."/>
            <person name="Zhai Y."/>
            <person name="Wei H."/>
            <person name="Zhang C."/>
            <person name="Xing G."/>
            <person name="Yu Y."/>
            <person name="He F."/>
        </authorList>
    </citation>
    <scope>NUCLEOTIDE SEQUENCE [MRNA] (ISOFORM 4)</scope>
    <source>
        <tissue>Spleen</tissue>
    </source>
</reference>
<reference key="3">
    <citation type="journal article" date="2003" name="Eur. J. Biochem.">
        <title>A novel homocysteine-responsive gene, smap8, modulates mitogenesis in rat vascular smooth muscle cells.</title>
        <authorList>
            <person name="Nishimoto S."/>
            <person name="Tawara J."/>
            <person name="Toyoda H."/>
            <person name="Kitamura K."/>
            <person name="Komurasaki T."/>
        </authorList>
    </citation>
    <scope>NUCLEOTIDE SEQUENCE [MRNA] (ISOFORM 3)</scope>
    <scope>FUNCTION</scope>
    <scope>SUBCELLULAR LOCATION</scope>
    <scope>PHOSPHORYLATION</scope>
    <scope>TISSUE SPECIFICITY</scope>
    <source>
        <tissue>Heart</tissue>
    </source>
</reference>
<reference key="4">
    <citation type="journal article" date="2001" name="Genome Res.">
        <title>Towards a catalog of human genes and proteins: sequencing and analysis of 500 novel complete protein coding human cDNAs.</title>
        <authorList>
            <person name="Wiemann S."/>
            <person name="Weil B."/>
            <person name="Wellenreuther R."/>
            <person name="Gassenhuber J."/>
            <person name="Glassl S."/>
            <person name="Ansorge W."/>
            <person name="Boecher M."/>
            <person name="Bloecker H."/>
            <person name="Bauersachs S."/>
            <person name="Blum H."/>
            <person name="Lauber J."/>
            <person name="Duesterhoeft A."/>
            <person name="Beyer A."/>
            <person name="Koehrer K."/>
            <person name="Strack N."/>
            <person name="Mewes H.-W."/>
            <person name="Ottenwaelder B."/>
            <person name="Obermaier B."/>
            <person name="Tampe J."/>
            <person name="Heubner D."/>
            <person name="Wambutt R."/>
            <person name="Korn B."/>
            <person name="Klein M."/>
            <person name="Poustka A."/>
        </authorList>
    </citation>
    <scope>NUCLEOTIDE SEQUENCE [LARGE SCALE MRNA] (ISOFORM 2)</scope>
    <source>
        <tissue>Amygdala</tissue>
    </source>
</reference>
<reference key="5">
    <citation type="journal article" date="2004" name="Nat. Genet.">
        <title>Complete sequencing and characterization of 21,243 full-length human cDNAs.</title>
        <authorList>
            <person name="Ota T."/>
            <person name="Suzuki Y."/>
            <person name="Nishikawa T."/>
            <person name="Otsuki T."/>
            <person name="Sugiyama T."/>
            <person name="Irie R."/>
            <person name="Wakamatsu A."/>
            <person name="Hayashi K."/>
            <person name="Sato H."/>
            <person name="Nagai K."/>
            <person name="Kimura K."/>
            <person name="Makita H."/>
            <person name="Sekine M."/>
            <person name="Obayashi M."/>
            <person name="Nishi T."/>
            <person name="Shibahara T."/>
            <person name="Tanaka T."/>
            <person name="Ishii S."/>
            <person name="Yamamoto J."/>
            <person name="Saito K."/>
            <person name="Kawai Y."/>
            <person name="Isono Y."/>
            <person name="Nakamura Y."/>
            <person name="Nagahari K."/>
            <person name="Murakami K."/>
            <person name="Yasuda T."/>
            <person name="Iwayanagi T."/>
            <person name="Wagatsuma M."/>
            <person name="Shiratori A."/>
            <person name="Sudo H."/>
            <person name="Hosoiri T."/>
            <person name="Kaku Y."/>
            <person name="Kodaira H."/>
            <person name="Kondo H."/>
            <person name="Sugawara M."/>
            <person name="Takahashi M."/>
            <person name="Kanda K."/>
            <person name="Yokoi T."/>
            <person name="Furuya T."/>
            <person name="Kikkawa E."/>
            <person name="Omura Y."/>
            <person name="Abe K."/>
            <person name="Kamihara K."/>
            <person name="Katsuta N."/>
            <person name="Sato K."/>
            <person name="Tanikawa M."/>
            <person name="Yamazaki M."/>
            <person name="Ninomiya K."/>
            <person name="Ishibashi T."/>
            <person name="Yamashita H."/>
            <person name="Murakawa K."/>
            <person name="Fujimori K."/>
            <person name="Tanai H."/>
            <person name="Kimata M."/>
            <person name="Watanabe M."/>
            <person name="Hiraoka S."/>
            <person name="Chiba Y."/>
            <person name="Ishida S."/>
            <person name="Ono Y."/>
            <person name="Takiguchi S."/>
            <person name="Watanabe S."/>
            <person name="Yosida M."/>
            <person name="Hotuta T."/>
            <person name="Kusano J."/>
            <person name="Kanehori K."/>
            <person name="Takahashi-Fujii A."/>
            <person name="Hara H."/>
            <person name="Tanase T.-O."/>
            <person name="Nomura Y."/>
            <person name="Togiya S."/>
            <person name="Komai F."/>
            <person name="Hara R."/>
            <person name="Takeuchi K."/>
            <person name="Arita M."/>
            <person name="Imose N."/>
            <person name="Musashino K."/>
            <person name="Yuuki H."/>
            <person name="Oshima A."/>
            <person name="Sasaki N."/>
            <person name="Aotsuka S."/>
            <person name="Yoshikawa Y."/>
            <person name="Matsunawa H."/>
            <person name="Ichihara T."/>
            <person name="Shiohata N."/>
            <person name="Sano S."/>
            <person name="Moriya S."/>
            <person name="Momiyama H."/>
            <person name="Satoh N."/>
            <person name="Takami S."/>
            <person name="Terashima Y."/>
            <person name="Suzuki O."/>
            <person name="Nakagawa S."/>
            <person name="Senoh A."/>
            <person name="Mizoguchi H."/>
            <person name="Goto Y."/>
            <person name="Shimizu F."/>
            <person name="Wakebe H."/>
            <person name="Hishigaki H."/>
            <person name="Watanabe T."/>
            <person name="Sugiyama A."/>
            <person name="Takemoto M."/>
            <person name="Kawakami B."/>
            <person name="Yamazaki M."/>
            <person name="Watanabe K."/>
            <person name="Kumagai A."/>
            <person name="Itakura S."/>
            <person name="Fukuzumi Y."/>
            <person name="Fujimori Y."/>
            <person name="Komiyama M."/>
            <person name="Tashiro H."/>
            <person name="Tanigami A."/>
            <person name="Fujiwara T."/>
            <person name="Ono T."/>
            <person name="Yamada K."/>
            <person name="Fujii Y."/>
            <person name="Ozaki K."/>
            <person name="Hirao M."/>
            <person name="Ohmori Y."/>
            <person name="Kawabata A."/>
            <person name="Hikiji T."/>
            <person name="Kobatake N."/>
            <person name="Inagaki H."/>
            <person name="Ikema Y."/>
            <person name="Okamoto S."/>
            <person name="Okitani R."/>
            <person name="Kawakami T."/>
            <person name="Noguchi S."/>
            <person name="Itoh T."/>
            <person name="Shigeta K."/>
            <person name="Senba T."/>
            <person name="Matsumura K."/>
            <person name="Nakajima Y."/>
            <person name="Mizuno T."/>
            <person name="Morinaga M."/>
            <person name="Sasaki M."/>
            <person name="Togashi T."/>
            <person name="Oyama M."/>
            <person name="Hata H."/>
            <person name="Watanabe M."/>
            <person name="Komatsu T."/>
            <person name="Mizushima-Sugano J."/>
            <person name="Satoh T."/>
            <person name="Shirai Y."/>
            <person name="Takahashi Y."/>
            <person name="Nakagawa K."/>
            <person name="Okumura K."/>
            <person name="Nagase T."/>
            <person name="Nomura N."/>
            <person name="Kikuchi H."/>
            <person name="Masuho Y."/>
            <person name="Yamashita R."/>
            <person name="Nakai K."/>
            <person name="Yada T."/>
            <person name="Nakamura Y."/>
            <person name="Ohara O."/>
            <person name="Isogai T."/>
            <person name="Sugano S."/>
        </authorList>
    </citation>
    <scope>NUCLEOTIDE SEQUENCE [LARGE SCALE MRNA] (ISOFORMS 2; 5; 6; 7 AND 8)</scope>
    <source>
        <tissue>Brain</tissue>
        <tissue>Cerebellum</tissue>
        <tissue>Hippocampus</tissue>
        <tissue>Thalamus</tissue>
    </source>
</reference>
<reference key="6">
    <citation type="journal article" date="2004" name="Nature">
        <title>The sequence and analysis of duplication-rich human chromosome 16.</title>
        <authorList>
            <person name="Martin J."/>
            <person name="Han C."/>
            <person name="Gordon L.A."/>
            <person name="Terry A."/>
            <person name="Prabhakar S."/>
            <person name="She X."/>
            <person name="Xie G."/>
            <person name="Hellsten U."/>
            <person name="Chan Y.M."/>
            <person name="Altherr M."/>
            <person name="Couronne O."/>
            <person name="Aerts A."/>
            <person name="Bajorek E."/>
            <person name="Black S."/>
            <person name="Blumer H."/>
            <person name="Branscomb E."/>
            <person name="Brown N.C."/>
            <person name="Bruno W.J."/>
            <person name="Buckingham J.M."/>
            <person name="Callen D.F."/>
            <person name="Campbell C.S."/>
            <person name="Campbell M.L."/>
            <person name="Campbell E.W."/>
            <person name="Caoile C."/>
            <person name="Challacombe J.F."/>
            <person name="Chasteen L.A."/>
            <person name="Chertkov O."/>
            <person name="Chi H.C."/>
            <person name="Christensen M."/>
            <person name="Clark L.M."/>
            <person name="Cohn J.D."/>
            <person name="Denys M."/>
            <person name="Detter J.C."/>
            <person name="Dickson M."/>
            <person name="Dimitrijevic-Bussod M."/>
            <person name="Escobar J."/>
            <person name="Fawcett J.J."/>
            <person name="Flowers D."/>
            <person name="Fotopulos D."/>
            <person name="Glavina T."/>
            <person name="Gomez M."/>
            <person name="Gonzales E."/>
            <person name="Goodstein D."/>
            <person name="Goodwin L.A."/>
            <person name="Grady D.L."/>
            <person name="Grigoriev I."/>
            <person name="Groza M."/>
            <person name="Hammon N."/>
            <person name="Hawkins T."/>
            <person name="Haydu L."/>
            <person name="Hildebrand C.E."/>
            <person name="Huang W."/>
            <person name="Israni S."/>
            <person name="Jett J."/>
            <person name="Jewett P.B."/>
            <person name="Kadner K."/>
            <person name="Kimball H."/>
            <person name="Kobayashi A."/>
            <person name="Krawczyk M.-C."/>
            <person name="Leyba T."/>
            <person name="Longmire J.L."/>
            <person name="Lopez F."/>
            <person name="Lou Y."/>
            <person name="Lowry S."/>
            <person name="Ludeman T."/>
            <person name="Manohar C.F."/>
            <person name="Mark G.A."/>
            <person name="McMurray K.L."/>
            <person name="Meincke L.J."/>
            <person name="Morgan J."/>
            <person name="Moyzis R.K."/>
            <person name="Mundt M.O."/>
            <person name="Munk A.C."/>
            <person name="Nandkeshwar R.D."/>
            <person name="Pitluck S."/>
            <person name="Pollard M."/>
            <person name="Predki P."/>
            <person name="Parson-Quintana B."/>
            <person name="Ramirez L."/>
            <person name="Rash S."/>
            <person name="Retterer J."/>
            <person name="Ricke D.O."/>
            <person name="Robinson D.L."/>
            <person name="Rodriguez A."/>
            <person name="Salamov A."/>
            <person name="Saunders E.H."/>
            <person name="Scott D."/>
            <person name="Shough T."/>
            <person name="Stallings R.L."/>
            <person name="Stalvey M."/>
            <person name="Sutherland R.D."/>
            <person name="Tapia R."/>
            <person name="Tesmer J.G."/>
            <person name="Thayer N."/>
            <person name="Thompson L.S."/>
            <person name="Tice H."/>
            <person name="Torney D.C."/>
            <person name="Tran-Gyamfi M."/>
            <person name="Tsai M."/>
            <person name="Ulanovsky L.E."/>
            <person name="Ustaszewska A."/>
            <person name="Vo N."/>
            <person name="White P.S."/>
            <person name="Williams A.L."/>
            <person name="Wills P.L."/>
            <person name="Wu J.-R."/>
            <person name="Wu K."/>
            <person name="Yang J."/>
            <person name="DeJong P."/>
            <person name="Bruce D."/>
            <person name="Doggett N.A."/>
            <person name="Deaven L."/>
            <person name="Schmutz J."/>
            <person name="Grimwood J."/>
            <person name="Richardson P."/>
            <person name="Rokhsar D.S."/>
            <person name="Eichler E.E."/>
            <person name="Gilna P."/>
            <person name="Lucas S.M."/>
            <person name="Myers R.M."/>
            <person name="Rubin E.M."/>
            <person name="Pennacchio L.A."/>
        </authorList>
    </citation>
    <scope>NUCLEOTIDE SEQUENCE [LARGE SCALE GENOMIC DNA]</scope>
</reference>
<reference key="7">
    <citation type="journal article" date="2004" name="Genome Res.">
        <title>The status, quality, and expansion of the NIH full-length cDNA project: the Mammalian Gene Collection (MGC).</title>
        <authorList>
            <consortium name="The MGC Project Team"/>
        </authorList>
    </citation>
    <scope>NUCLEOTIDE SEQUENCE [LARGE SCALE MRNA] (ISOFORM 2)</scope>
    <source>
        <tissue>Muscle</tissue>
    </source>
</reference>
<reference key="8">
    <citation type="journal article" date="1999" name="DNA Res.">
        <title>Characterization of cDNA clones selected by the GeneMark analysis from size-fractionated cDNA libraries from human brain.</title>
        <authorList>
            <person name="Hirosawa M."/>
            <person name="Nagase T."/>
            <person name="Ishikawa K."/>
            <person name="Kikuno R."/>
            <person name="Nomura N."/>
            <person name="Ohara O."/>
        </authorList>
    </citation>
    <scope>NUCLEOTIDE SEQUENCE [LARGE SCALE MRNA] OF 80-352 (ISOFORM 1)</scope>
    <source>
        <tissue>Brain</tissue>
    </source>
</reference>
<reference key="9">
    <citation type="journal article" date="2002" name="DNA Res.">
        <title>Construction of expression-ready cDNA clones for KIAA genes: manual curation of 330 KIAA cDNA clones.</title>
        <authorList>
            <person name="Nakajima D."/>
            <person name="Okazaki N."/>
            <person name="Yamakawa H."/>
            <person name="Kikuno R."/>
            <person name="Ohara O."/>
            <person name="Nagase T."/>
        </authorList>
    </citation>
    <scope>SEQUENCE REVISION</scope>
</reference>
<reference key="10">
    <citation type="journal article" date="2009" name="J. Biol. Chem.">
        <title>NDRG4 is required for cell cycle progression and survival in glioblastoma cells.</title>
        <authorList>
            <person name="Schilling S.H."/>
            <person name="Hjelmeland A.B."/>
            <person name="Radiloff D.R."/>
            <person name="Liu I.M."/>
            <person name="Wakeman T.P."/>
            <person name="Fielhauer J.R."/>
            <person name="Foster E.H."/>
            <person name="Lathia J.D."/>
            <person name="Rich J.N."/>
            <person name="Wang X.F."/>
            <person name="Datto M.B."/>
        </authorList>
    </citation>
    <scope>SUBCELLULAR LOCATION</scope>
    <scope>TISSUE SPECIFICITY</scope>
    <scope>DEVELOPMENTAL STAGE</scope>
</reference>
<proteinExistence type="evidence at protein level"/>
<organism>
    <name type="scientific">Homo sapiens</name>
    <name type="common">Human</name>
    <dbReference type="NCBI Taxonomy" id="9606"/>
    <lineage>
        <taxon>Eukaryota</taxon>
        <taxon>Metazoa</taxon>
        <taxon>Chordata</taxon>
        <taxon>Craniata</taxon>
        <taxon>Vertebrata</taxon>
        <taxon>Euteleostomi</taxon>
        <taxon>Mammalia</taxon>
        <taxon>Eutheria</taxon>
        <taxon>Euarchontoglires</taxon>
        <taxon>Primates</taxon>
        <taxon>Haplorrhini</taxon>
        <taxon>Catarrhini</taxon>
        <taxon>Hominidae</taxon>
        <taxon>Homo</taxon>
    </lineage>
</organism>
<gene>
    <name type="primary">NDRG4</name>
    <name type="synonym">BDM1</name>
    <name type="synonym">KIAA1180</name>
</gene>
<name>NDRG4_HUMAN</name>
<comment type="function">
    <text evidence="1 6">Contributes to the maintenance of intracerebral BDNF levels within the normal range, which is necessary for the preservation of spatial learning and the resistance to neuronal cell death caused by ischemic stress (By similarity). May enhance growth factor-induced ERK1 and ERK2 phosphorylation, including that induced by PDGF and FGF. May attenuate NGF-promoted ELK1 phosphorylation in a microtubule-dependent manner.</text>
</comment>
<comment type="interaction">
    <interactant intactId="EBI-10323810">
        <id>Q9ULP0</id>
    </interactant>
    <interactant intactId="EBI-741181">
        <id>Q6RW13</id>
        <label>AGTRAP</label>
    </interactant>
    <organismsDiffer>false</organismsDiffer>
    <experiments>3</experiments>
</comment>
<comment type="interaction">
    <interactant intactId="EBI-10323810">
        <id>Q9ULP0</id>
    </interactant>
    <interactant intactId="EBI-714543">
        <id>Q15041</id>
        <label>ARL6IP1</label>
    </interactant>
    <organismsDiffer>false</organismsDiffer>
    <experiments>3</experiments>
</comment>
<comment type="interaction">
    <interactant intactId="EBI-10323810">
        <id>Q9ULP0</id>
    </interactant>
    <interactant intactId="EBI-2548702">
        <id>Q96DZ9</id>
        <label>CMTM5</label>
    </interactant>
    <organismsDiffer>false</organismsDiffer>
    <experiments>3</experiments>
</comment>
<comment type="interaction">
    <interactant intactId="EBI-10323810">
        <id>Q9ULP0</id>
    </interactant>
    <interactant intactId="EBI-712367">
        <id>Q9UI14</id>
        <label>RABAC1</label>
    </interactant>
    <organismsDiffer>false</organismsDiffer>
    <experiments>3</experiments>
</comment>
<comment type="interaction">
    <interactant intactId="EBI-11978907">
        <id>Q9ULP0-2</id>
    </interactant>
    <interactant intactId="EBI-11522760">
        <id>Q6RW13-2</id>
        <label>AGTRAP</label>
    </interactant>
    <organismsDiffer>false</organismsDiffer>
    <experiments>6</experiments>
</comment>
<comment type="interaction">
    <interactant intactId="EBI-11978907">
        <id>Q9ULP0-2</id>
    </interactant>
    <interactant intactId="EBI-638194">
        <id>P53365</id>
        <label>ARFIP2</label>
    </interactant>
    <organismsDiffer>false</organismsDiffer>
    <experiments>3</experiments>
</comment>
<comment type="interaction">
    <interactant intactId="EBI-11978907">
        <id>Q9ULP0-2</id>
    </interactant>
    <interactant intactId="EBI-714543">
        <id>Q15041</id>
        <label>ARL6IP1</label>
    </interactant>
    <organismsDiffer>false</organismsDiffer>
    <experiments>3</experiments>
</comment>
<comment type="interaction">
    <interactant intactId="EBI-11978907">
        <id>Q9ULP0-2</id>
    </interactant>
    <interactant intactId="EBI-2606700">
        <id>P18859</id>
        <label>ATP5PF</label>
    </interactant>
    <organismsDiffer>false</organismsDiffer>
    <experiments>3</experiments>
</comment>
<comment type="interaction">
    <interactant intactId="EBI-11978907">
        <id>Q9ULP0-2</id>
    </interactant>
    <interactant intactId="EBI-8652492">
        <id>Q9UGQ2</id>
        <label>CACFD1</label>
    </interactant>
    <organismsDiffer>false</organismsDiffer>
    <experiments>3</experiments>
</comment>
<comment type="interaction">
    <interactant intactId="EBI-11978907">
        <id>Q9ULP0-2</id>
    </interactant>
    <interactant intactId="EBI-2836538">
        <id>P51861</id>
        <label>CDR1</label>
    </interactant>
    <organismsDiffer>false</organismsDiffer>
    <experiments>3</experiments>
</comment>
<comment type="interaction">
    <interactant intactId="EBI-11978907">
        <id>Q9ULP0-2</id>
    </interactant>
    <interactant intactId="EBI-7062247">
        <id>Q9UHD4</id>
        <label>CIDEB</label>
    </interactant>
    <organismsDiffer>false</organismsDiffer>
    <experiments>3</experiments>
</comment>
<comment type="interaction">
    <interactant intactId="EBI-11978907">
        <id>Q9ULP0-2</id>
    </interactant>
    <interactant intactId="EBI-11522780">
        <id>Q96DZ9-2</id>
        <label>CMTM5</label>
    </interactant>
    <organismsDiffer>false</organismsDiffer>
    <experiments>7</experiments>
</comment>
<comment type="interaction">
    <interactant intactId="EBI-11978907">
        <id>Q9ULP0-2</id>
    </interactant>
    <interactant intactId="EBI-10897372">
        <id>Q9NZJ6</id>
        <label>COQ3</label>
    </interactant>
    <organismsDiffer>false</organismsDiffer>
    <experiments>3</experiments>
</comment>
<comment type="interaction">
    <interactant intactId="EBI-11978907">
        <id>Q9ULP0-2</id>
    </interactant>
    <interactant intactId="EBI-2689453">
        <id>Q6PUV4</id>
        <label>CPLX2</label>
    </interactant>
    <organismsDiffer>false</organismsDiffer>
    <experiments>3</experiments>
</comment>
<comment type="interaction">
    <interactant intactId="EBI-11978907">
        <id>Q9ULP0-2</id>
    </interactant>
    <interactant intactId="EBI-742054">
        <id>Q96D03</id>
        <label>DDIT4L</label>
    </interactant>
    <organismsDiffer>false</organismsDiffer>
    <experiments>3</experiments>
</comment>
<comment type="interaction">
    <interactant intactId="EBI-11978907">
        <id>Q9ULP0-2</id>
    </interactant>
    <interactant intactId="EBI-12831318">
        <id>Q96Q80</id>
        <label>DERL3</label>
    </interactant>
    <organismsDiffer>false</organismsDiffer>
    <experiments>3</experiments>
</comment>
<comment type="interaction">
    <interactant intactId="EBI-11978907">
        <id>Q9ULP0-2</id>
    </interactant>
    <interactant intactId="EBI-12831978">
        <id>Q6ZPD8</id>
        <label>DGAT2L6</label>
    </interactant>
    <organismsDiffer>false</organismsDiffer>
    <experiments>3</experiments>
</comment>
<comment type="interaction">
    <interactant intactId="EBI-11978907">
        <id>Q9ULP0-2</id>
    </interactant>
    <interactant intactId="EBI-781551">
        <id>Q9Y282</id>
        <label>ERGIC3</label>
    </interactant>
    <organismsDiffer>false</organismsDiffer>
    <experiments>3</experiments>
</comment>
<comment type="interaction">
    <interactant intactId="EBI-11978907">
        <id>Q9ULP0-2</id>
    </interactant>
    <interactant intactId="EBI-17490413">
        <id>A8MZ59</id>
        <label>LEUTX</label>
    </interactant>
    <organismsDiffer>false</organismsDiffer>
    <experiments>3</experiments>
</comment>
<comment type="interaction">
    <interactant intactId="EBI-11978907">
        <id>Q9ULP0-2</id>
    </interactant>
    <interactant intactId="EBI-2830566">
        <id>Q9H400</id>
        <label>LIME1</label>
    </interactant>
    <organismsDiffer>false</organismsDiffer>
    <experiments>3</experiments>
</comment>
<comment type="interaction">
    <interactant intactId="EBI-11978907">
        <id>Q9ULP0-2</id>
    </interactant>
    <interactant intactId="EBI-358888">
        <id>Q96AG4</id>
        <label>LRRC59</label>
    </interactant>
    <organismsDiffer>false</organismsDiffer>
    <experiments>3</experiments>
</comment>
<comment type="interaction">
    <interactant intactId="EBI-11978907">
        <id>Q9ULP0-2</id>
    </interactant>
    <interactant intactId="EBI-944295">
        <id>Q969L2</id>
        <label>MAL2</label>
    </interactant>
    <organismsDiffer>false</organismsDiffer>
    <experiments>8</experiments>
</comment>
<comment type="interaction">
    <interactant intactId="EBI-11978907">
        <id>Q9ULP0-2</id>
    </interactant>
    <interactant intactId="EBI-3923617">
        <id>Q9H2K0</id>
        <label>MTIF3</label>
    </interactant>
    <organismsDiffer>false</organismsDiffer>
    <experiments>3</experiments>
</comment>
<comment type="interaction">
    <interactant intactId="EBI-11978907">
        <id>Q9ULP0-2</id>
    </interactant>
    <interactant intactId="EBI-608347">
        <id>Q04941</id>
        <label>PLP2</label>
    </interactant>
    <organismsDiffer>false</organismsDiffer>
    <experiments>3</experiments>
</comment>
<comment type="interaction">
    <interactant intactId="EBI-11978907">
        <id>Q9ULP0-2</id>
    </interactant>
    <interactant intactId="EBI-2506064">
        <id>O60831</id>
        <label>PRAF2</label>
    </interactant>
    <organismsDiffer>false</organismsDiffer>
    <experiments>3</experiments>
</comment>
<comment type="interaction">
    <interactant intactId="EBI-11978907">
        <id>Q9ULP0-2</id>
    </interactant>
    <interactant intactId="EBI-712367">
        <id>Q9UI14</id>
        <label>RABAC1</label>
    </interactant>
    <organismsDiffer>false</organismsDiffer>
    <experiments>3</experiments>
</comment>
<comment type="interaction">
    <interactant intactId="EBI-11978907">
        <id>Q9ULP0-2</id>
    </interactant>
    <interactant intactId="EBI-14065960">
        <id>Q96HR9-2</id>
        <label>REEP6</label>
    </interactant>
    <organismsDiffer>false</organismsDiffer>
    <experiments>7</experiments>
</comment>
<comment type="interaction">
    <interactant intactId="EBI-11978907">
        <id>Q9ULP0-2</id>
    </interactant>
    <interactant intactId="EBI-17589229">
        <id>Q6NTF9-3</id>
        <label>RHBDD2</label>
    </interactant>
    <organismsDiffer>false</organismsDiffer>
    <experiments>3</experiments>
</comment>
<comment type="interaction">
    <interactant intactId="EBI-11978907">
        <id>Q9ULP0-2</id>
    </interactant>
    <interactant intactId="EBI-11525735">
        <id>O95197-3</id>
        <label>RTN3</label>
    </interactant>
    <organismsDiffer>false</organismsDiffer>
    <experiments>3</experiments>
</comment>
<comment type="interaction">
    <interactant intactId="EBI-11978907">
        <id>Q9ULP0-2</id>
    </interactant>
    <interactant intactId="EBI-954338">
        <id>O15126</id>
        <label>SCAMP1</label>
    </interactant>
    <organismsDiffer>false</organismsDiffer>
    <experiments>3</experiments>
</comment>
<comment type="interaction">
    <interactant intactId="EBI-11978907">
        <id>Q9ULP0-2</id>
    </interactant>
    <interactant intactId="EBI-3923480">
        <id>Q8N3Y7</id>
        <label>SDR16C5</label>
    </interactant>
    <organismsDiffer>false</organismsDiffer>
    <experiments>3</experiments>
</comment>
<comment type="interaction">
    <interactant intactId="EBI-11978907">
        <id>Q9ULP0-2</id>
    </interactant>
    <interactant intactId="EBI-2854842">
        <id>Q8WV19</id>
        <label>SFT2D1</label>
    </interactant>
    <organismsDiffer>false</organismsDiffer>
    <experiments>3</experiments>
</comment>
<comment type="interaction">
    <interactant intactId="EBI-11978907">
        <id>Q9ULP0-2</id>
    </interactant>
    <interactant intactId="EBI-4402330">
        <id>O95562</id>
        <label>SFT2D2</label>
    </interactant>
    <organismsDiffer>false</organismsDiffer>
    <experiments>3</experiments>
</comment>
<comment type="interaction">
    <interactant intactId="EBI-11978907">
        <id>Q9ULP0-2</id>
    </interactant>
    <interactant intactId="EBI-1042854">
        <id>O00141</id>
        <label>SGK1</label>
    </interactant>
    <organismsDiffer>false</organismsDiffer>
    <experiments>3</experiments>
</comment>
<comment type="interaction">
    <interactant intactId="EBI-11978907">
        <id>Q9ULP0-2</id>
    </interactant>
    <interactant intactId="EBI-13384308">
        <id>H3BQL7</id>
        <label>SIN3A</label>
    </interactant>
    <organismsDiffer>false</organismsDiffer>
    <experiments>3</experiments>
</comment>
<comment type="interaction">
    <interactant intactId="EBI-11978907">
        <id>Q9ULP0-2</id>
    </interactant>
    <interactant intactId="EBI-12828299">
        <id>O60906</id>
        <label>SMPD2</label>
    </interactant>
    <organismsDiffer>false</organismsDiffer>
    <experiments>3</experiments>
</comment>
<comment type="interaction">
    <interactant intactId="EBI-11978907">
        <id>Q9ULP0-2</id>
    </interactant>
    <interactant intactId="EBI-12187159">
        <id>O43759-2</id>
        <label>SYNGR1</label>
    </interactant>
    <organismsDiffer>false</organismsDiffer>
    <experiments>3</experiments>
</comment>
<comment type="interaction">
    <interactant intactId="EBI-11978907">
        <id>Q9ULP0-2</id>
    </interactant>
    <interactant intactId="EBI-11321949">
        <id>O43761</id>
        <label>SYNGR3</label>
    </interactant>
    <organismsDiffer>false</organismsDiffer>
    <experiments>3</experiments>
</comment>
<comment type="interaction">
    <interactant intactId="EBI-11978907">
        <id>Q9ULP0-2</id>
    </interactant>
    <interactant intactId="EBI-9071725">
        <id>P08247</id>
        <label>SYP</label>
    </interactant>
    <organismsDiffer>false</organismsDiffer>
    <experiments>3</experiments>
</comment>
<comment type="interaction">
    <interactant intactId="EBI-11978907">
        <id>Q9ULP0-2</id>
    </interactant>
    <interactant intactId="EBI-726691">
        <id>Q8WY91</id>
        <label>THAP4</label>
    </interactant>
    <organismsDiffer>false</organismsDiffer>
    <experiments>3</experiments>
</comment>
<comment type="interaction">
    <interactant intactId="EBI-11978907">
        <id>Q9ULP0-2</id>
    </interactant>
    <interactant intactId="EBI-12876824">
        <id>Q9BTX3</id>
        <label>TMEM208</label>
    </interactant>
    <organismsDiffer>false</organismsDiffer>
    <experiments>3</experiments>
</comment>
<comment type="interaction">
    <interactant intactId="EBI-11978907">
        <id>Q9ULP0-2</id>
    </interactant>
    <interactant intactId="EBI-2799703">
        <id>O95070</id>
        <label>YIF1A</label>
    </interactant>
    <organismsDiffer>false</organismsDiffer>
    <experiments>3</experiments>
</comment>
<comment type="subcellular location">
    <subcellularLocation>
        <location evidence="6 7">Cytoplasm</location>
        <location evidence="6 7">Cytosol</location>
    </subcellularLocation>
</comment>
<comment type="alternative products">
    <event type="alternative splicing"/>
    <isoform>
        <id>Q9ULP0-1</id>
        <name>1</name>
        <name>NDRG4-BVar</name>
        <sequence type="displayed"/>
    </isoform>
    <isoform>
        <id>Q9ULP0-2</id>
        <name>2</name>
        <name>NDRG4-B</name>
        <sequence type="described" ref="VSP_003422"/>
    </isoform>
    <isoform>
        <id>Q9ULP0-3</id>
        <name>3</name>
        <name>NDRG4-H</name>
        <sequence type="described" ref="VSP_003421 VSP_003422"/>
    </isoform>
    <isoform>
        <id>Q9ULP0-4</id>
        <name>4</name>
        <sequence type="described" ref="VSP_003423"/>
    </isoform>
    <isoform>
        <id>Q9ULP0-5</id>
        <name>5</name>
        <sequence type="described" ref="VSP_022957 VSP_003422"/>
    </isoform>
    <isoform>
        <id>Q9ULP0-6</id>
        <name>6</name>
        <sequence type="described" ref="VSP_022956 VSP_003422"/>
    </isoform>
    <isoform>
        <id>Q9ULP0-7</id>
        <name>7</name>
        <sequence type="described" ref="VSP_045830 VSP_003422"/>
    </isoform>
    <isoform>
        <id>Q9ULP0-8</id>
        <name>8</name>
        <sequence type="described" ref="VSP_046326 VSP_003422"/>
    </isoform>
</comment>
<comment type="tissue specificity">
    <text evidence="5 6 7">Expressed predominantly in brain and heart (at protein level). In the brain, detected in astrocytes. Isoform 1 and isoform 2 are only expressed in brain. Isoform 3 is expressed in both heart and brain. Up-regulated in glioblastoma multiforme cells.</text>
</comment>
<comment type="developmental stage">
    <text evidence="7">Expressed in a cell cycle-specific manner in glioblastoma multiple cells. Low levels in G2/M cells increase with progression through G1 phase and entry and progression through S phase.</text>
</comment>
<comment type="PTM">
    <text evidence="6">Phosphorylated in an aortic smooth muscle cell line, following PDGF treatment.</text>
</comment>
<comment type="similarity">
    <text evidence="13">Belongs to the NDRG family.</text>
</comment>
<comment type="sequence caution" evidence="13">
    <conflict type="erroneous initiation">
        <sequence resource="EMBL-CDS" id="BAA86494"/>
    </conflict>
    <text>Extended N-terminus.</text>
</comment>
<keyword id="KW-0025">Alternative splicing</keyword>
<keyword id="KW-0963">Cytoplasm</keyword>
<keyword id="KW-0597">Phosphoprotein</keyword>
<keyword id="KW-1267">Proteomics identification</keyword>
<keyword id="KW-1185">Reference proteome</keyword>
<feature type="chain" id="PRO_0000159579" description="Protein NDRG4">
    <location>
        <begin position="1"/>
        <end position="352"/>
    </location>
</feature>
<feature type="region of interest" description="Disordered" evidence="4">
    <location>
        <begin position="314"/>
        <end position="352"/>
    </location>
</feature>
<feature type="compositionally biased region" description="Low complexity" evidence="4">
    <location>
        <begin position="314"/>
        <end position="323"/>
    </location>
</feature>
<feature type="compositionally biased region" description="Polar residues" evidence="4">
    <location>
        <begin position="330"/>
        <end position="352"/>
    </location>
</feature>
<feature type="modified residue" description="Phosphoserine" evidence="3">
    <location>
        <position position="298"/>
    </location>
</feature>
<feature type="modified residue" description="Phosphoserine" evidence="3">
    <location>
        <position position="317"/>
    </location>
</feature>
<feature type="modified residue" description="Phosphoserine" evidence="2">
    <location>
        <position position="323"/>
    </location>
</feature>
<feature type="splice variant" id="VSP_003421" description="In isoform 3." evidence="10">
    <original>MPECWDG</original>
    <variation>MAGLQELRFPEEKPLLRGQDATELESSDAFLLAADTDWK</variation>
    <location>
        <begin position="1"/>
        <end position="7"/>
    </location>
</feature>
<feature type="splice variant" id="VSP_022956" description="In isoform 6." evidence="11">
    <original>MPECWDG</original>
    <variation>MKVLGHRLELLTGLLLHDVTMAGLQELRFPEEKPLLRGQDATELESSDAFLLAADTDWK</variation>
    <location>
        <begin position="1"/>
        <end position="7"/>
    </location>
</feature>
<feature type="splice variant" id="VSP_045830" description="In isoform 7." evidence="11">
    <original>G</original>
    <variation>GVGEGNAGAVKLAGLGDPRWSPGHLLSPGHQ</variation>
    <location>
        <position position="7"/>
    </location>
</feature>
<feature type="splice variant" id="VSP_046326" description="In isoform 8." evidence="11">
    <original>G</original>
    <variation>GRSQERRLPRVSSTVSPLQ</variation>
    <location>
        <position position="7"/>
    </location>
</feature>
<feature type="splice variant" id="VSP_022957" description="In isoform 5." evidence="11">
    <original>H</original>
    <variation>RKCSPASVSPPLPPISQSD</variation>
    <location>
        <position position="43"/>
    </location>
</feature>
<feature type="splice variant" id="VSP_003422" description="In isoform 2, isoform 3, isoform 5, isoform 6, isoform 7 and isoform 8." evidence="8 10 11 12">
    <original>IAYLKDRRLSGGAV</original>
    <variation>M</variation>
    <location>
        <begin position="289"/>
        <end position="302"/>
    </location>
</feature>
<feature type="splice variant" id="VSP_003423" description="In isoform 4." evidence="9">
    <location>
        <begin position="291"/>
        <end position="303"/>
    </location>
</feature>
<feature type="sequence conflict" description="In Ref. 5; BAG61777." evidence="13" ref="5">
    <original>D</original>
    <variation>N</variation>
    <location>
        <position position="10"/>
    </location>
</feature>
<sequence>MPECWDGEHDIETPYGLLHVVIRGSPKGNRPAILTYHDVGLNHKLCFNTFFNFEDMQEITKHFVVCHVDAPGQQVGASQFPQGYQFPSMEQLAAMLPSVVQHFGFKYVIGIGVGAGAYVLAKFALIFPDLVEGLVLVNIDPNGKGWIDWAATKLSGLTSTLPDTVLSHLFSQEELVNNTELVQSYRQQIGNVVNQANLQLFWNMYNSRRDLDINRPGTVPNAKTLRCPVMLVVGDNAPAEDGVVECNSKLDPTTTTFLKMADSGGLPQVTQPGKLTEAFKYFLQGMGYIAYLKDRRLSGGAVPSASMTRLARSRTASLTSASSVDGSRPQACTHSESSEGLGQVNHTMEVSC</sequence>
<evidence type="ECO:0000250" key="1"/>
<evidence type="ECO:0000250" key="2">
    <source>
        <dbReference type="UniProtKB" id="Q8BTG7"/>
    </source>
</evidence>
<evidence type="ECO:0000250" key="3">
    <source>
        <dbReference type="UniProtKB" id="Q9Z2L9"/>
    </source>
</evidence>
<evidence type="ECO:0000256" key="4">
    <source>
        <dbReference type="SAM" id="MobiDB-lite"/>
    </source>
</evidence>
<evidence type="ECO:0000269" key="5">
    <source>
    </source>
</evidence>
<evidence type="ECO:0000269" key="6">
    <source>
    </source>
</evidence>
<evidence type="ECO:0000269" key="7">
    <source>
    </source>
</evidence>
<evidence type="ECO:0000303" key="8">
    <source>
    </source>
</evidence>
<evidence type="ECO:0000303" key="9">
    <source>
    </source>
</evidence>
<evidence type="ECO:0000303" key="10">
    <source>
    </source>
</evidence>
<evidence type="ECO:0000303" key="11">
    <source>
    </source>
</evidence>
<evidence type="ECO:0000303" key="12">
    <source>
    </source>
</evidence>
<evidence type="ECO:0000305" key="13"/>
<protein>
    <recommendedName>
        <fullName>Protein NDRG4</fullName>
    </recommendedName>
    <alternativeName>
        <fullName>Brain development-related molecule 1</fullName>
    </alternativeName>
    <alternativeName>
        <fullName>N-myc downstream-regulated gene 4 protein</fullName>
    </alternativeName>
    <alternativeName>
        <fullName>Vascular smooth muscle cell-associated protein 8</fullName>
        <shortName>SMAP-8</shortName>
    </alternativeName>
</protein>
<accession>Q9ULP0</accession>
<accession>B3KNU2</accession>
<accession>B4DK66</accession>
<accession>B4DSW5</accession>
<accession>H7C600</accession>
<accession>Q6ZNE7</accession>
<accession>Q6ZTI7</accession>
<accession>Q96PL9</accession>
<accession>Q9GZM1</accession>
<accession>Q9GZN3</accession>
<accession>Q9GZX0</accession>